<accession>Q6YRK0</accession>
<keyword id="KW-0963">Cytoplasm</keyword>
<keyword id="KW-0488">Methylation</keyword>
<keyword id="KW-0648">Protein biosynthesis</keyword>
<reference key="1">
    <citation type="journal article" date="2004" name="Nat. Genet.">
        <title>Reductive evolution suggested from the complete genome sequence of a plant-pathogenic phytoplasma.</title>
        <authorList>
            <person name="Oshima K."/>
            <person name="Kakizawa S."/>
            <person name="Nishigawa H."/>
            <person name="Jung H.-Y."/>
            <person name="Wei W."/>
            <person name="Suzuki S."/>
            <person name="Arashida R."/>
            <person name="Nakata D."/>
            <person name="Miyata S."/>
            <person name="Ugaki M."/>
            <person name="Namba S."/>
        </authorList>
    </citation>
    <scope>NUCLEOTIDE SEQUENCE [LARGE SCALE GENOMIC DNA]</scope>
    <source>
        <strain>OY-M</strain>
    </source>
</reference>
<proteinExistence type="inferred from homology"/>
<dbReference type="EMBL" id="AP006628">
    <property type="protein sequence ID" value="BAD04099.1"/>
    <property type="molecule type" value="Genomic_DNA"/>
</dbReference>
<dbReference type="SMR" id="Q6YRK0"/>
<dbReference type="STRING" id="262768.PAM_014"/>
<dbReference type="KEGG" id="poy:PAM_014"/>
<dbReference type="eggNOG" id="COG0216">
    <property type="taxonomic scope" value="Bacteria"/>
</dbReference>
<dbReference type="HOGENOM" id="CLU_036856_0_1_14"/>
<dbReference type="BioCyc" id="OYEL262768:G1G26-19-MONOMER"/>
<dbReference type="Proteomes" id="UP000002523">
    <property type="component" value="Chromosome"/>
</dbReference>
<dbReference type="GO" id="GO:0005737">
    <property type="term" value="C:cytoplasm"/>
    <property type="evidence" value="ECO:0007669"/>
    <property type="project" value="UniProtKB-SubCell"/>
</dbReference>
<dbReference type="GO" id="GO:0016149">
    <property type="term" value="F:translation release factor activity, codon specific"/>
    <property type="evidence" value="ECO:0007669"/>
    <property type="project" value="UniProtKB-UniRule"/>
</dbReference>
<dbReference type="FunFam" id="3.30.160.20:FF:000004">
    <property type="entry name" value="Peptide chain release factor 1"/>
    <property type="match status" value="1"/>
</dbReference>
<dbReference type="FunFam" id="3.30.70.1660:FF:000002">
    <property type="entry name" value="Peptide chain release factor 1"/>
    <property type="match status" value="1"/>
</dbReference>
<dbReference type="FunFam" id="3.30.70.1660:FF:000004">
    <property type="entry name" value="Peptide chain release factor 1"/>
    <property type="match status" value="1"/>
</dbReference>
<dbReference type="Gene3D" id="3.30.160.20">
    <property type="match status" value="1"/>
</dbReference>
<dbReference type="Gene3D" id="3.30.70.1660">
    <property type="match status" value="1"/>
</dbReference>
<dbReference type="Gene3D" id="6.10.140.1950">
    <property type="match status" value="1"/>
</dbReference>
<dbReference type="HAMAP" id="MF_00093">
    <property type="entry name" value="Rel_fac_1"/>
    <property type="match status" value="1"/>
</dbReference>
<dbReference type="InterPro" id="IPR005139">
    <property type="entry name" value="PCRF"/>
</dbReference>
<dbReference type="InterPro" id="IPR000352">
    <property type="entry name" value="Pep_chain_release_fac_I"/>
</dbReference>
<dbReference type="InterPro" id="IPR045853">
    <property type="entry name" value="Pep_chain_release_fac_I_sf"/>
</dbReference>
<dbReference type="InterPro" id="IPR050057">
    <property type="entry name" value="Prokaryotic/Mito_RF"/>
</dbReference>
<dbReference type="InterPro" id="IPR004373">
    <property type="entry name" value="RF-1"/>
</dbReference>
<dbReference type="NCBIfam" id="TIGR00019">
    <property type="entry name" value="prfA"/>
    <property type="match status" value="1"/>
</dbReference>
<dbReference type="NCBIfam" id="NF001859">
    <property type="entry name" value="PRK00591.1"/>
    <property type="match status" value="1"/>
</dbReference>
<dbReference type="PANTHER" id="PTHR43804">
    <property type="entry name" value="LD18447P"/>
    <property type="match status" value="1"/>
</dbReference>
<dbReference type="PANTHER" id="PTHR43804:SF7">
    <property type="entry name" value="LD18447P"/>
    <property type="match status" value="1"/>
</dbReference>
<dbReference type="Pfam" id="PF03462">
    <property type="entry name" value="PCRF"/>
    <property type="match status" value="1"/>
</dbReference>
<dbReference type="Pfam" id="PF00472">
    <property type="entry name" value="RF-1"/>
    <property type="match status" value="1"/>
</dbReference>
<dbReference type="SMART" id="SM00937">
    <property type="entry name" value="PCRF"/>
    <property type="match status" value="1"/>
</dbReference>
<dbReference type="SUPFAM" id="SSF75620">
    <property type="entry name" value="Release factor"/>
    <property type="match status" value="1"/>
</dbReference>
<name>RF1_ONYPE</name>
<sequence>MLDRLKIIKQKYQDLQKLLLNEQNINQKIDILKNLSKLEPTVELFNRYLNLETEFTQIQTILKTQQDQELLLLAHQEKDTILSEKKTTLDQLKILLLPQDPFDKKNVVLEIKGASGGNEANLFAADLLRTYVKYAESKKWKVEILNLNPSIKGGLSSVELLISGKNIYSFLKYESGVHRVQRVPATEAQGRIHTSTAVVLVVPEAEELELKIDWHDIRTDTFNSSGPGGQSVNTTKSAVRLTHIPSGISVACQEGKSQHENKDKAFTILKTRIYNQMLTAKQEEENKHRKNLVGTGERSEKIRTYNYPQNRITDHRIGLTLQKLDIIMEGKLDLVIEPLIHEAQKEQLAQS</sequence>
<evidence type="ECO:0000255" key="1">
    <source>
        <dbReference type="HAMAP-Rule" id="MF_00093"/>
    </source>
</evidence>
<gene>
    <name evidence="1" type="primary">prfA</name>
    <name type="synonym">pam014</name>
    <name type="ordered locus">PAM_014</name>
</gene>
<feature type="chain" id="PRO_1000117250" description="Peptide chain release factor 1">
    <location>
        <begin position="1"/>
        <end position="351"/>
    </location>
</feature>
<feature type="modified residue" description="N5-methylglutamine" evidence="1">
    <location>
        <position position="230"/>
    </location>
</feature>
<organism>
    <name type="scientific">Onion yellows phytoplasma (strain OY-M)</name>
    <dbReference type="NCBI Taxonomy" id="262768"/>
    <lineage>
        <taxon>Bacteria</taxon>
        <taxon>Bacillati</taxon>
        <taxon>Mycoplasmatota</taxon>
        <taxon>Mollicutes</taxon>
        <taxon>Acholeplasmatales</taxon>
        <taxon>Acholeplasmataceae</taxon>
        <taxon>Candidatus Phytoplasma</taxon>
        <taxon>16SrI (Aster yellows group)</taxon>
    </lineage>
</organism>
<comment type="function">
    <text evidence="1">Peptide chain release factor 1 directs the termination of translation in response to the peptide chain termination codons UAG and UAA.</text>
</comment>
<comment type="subcellular location">
    <subcellularLocation>
        <location evidence="1">Cytoplasm</location>
    </subcellularLocation>
</comment>
<comment type="PTM">
    <text evidence="1">Methylated by PrmC. Methylation increases the termination efficiency of RF1.</text>
</comment>
<comment type="similarity">
    <text evidence="1">Belongs to the prokaryotic/mitochondrial release factor family.</text>
</comment>
<protein>
    <recommendedName>
        <fullName evidence="1">Peptide chain release factor 1</fullName>
        <shortName evidence="1">RF-1</shortName>
    </recommendedName>
</protein>